<gene>
    <name type="primary">rpl13</name>
</gene>
<organism>
    <name type="scientific">Ictalurus punctatus</name>
    <name type="common">Channel catfish</name>
    <name type="synonym">Silurus punctatus</name>
    <dbReference type="NCBI Taxonomy" id="7998"/>
    <lineage>
        <taxon>Eukaryota</taxon>
        <taxon>Metazoa</taxon>
        <taxon>Chordata</taxon>
        <taxon>Craniata</taxon>
        <taxon>Vertebrata</taxon>
        <taxon>Euteleostomi</taxon>
        <taxon>Actinopterygii</taxon>
        <taxon>Neopterygii</taxon>
        <taxon>Teleostei</taxon>
        <taxon>Ostariophysi</taxon>
        <taxon>Siluriformes</taxon>
        <taxon>Ictaluridae</taxon>
        <taxon>Ictalurus</taxon>
    </lineage>
</organism>
<keyword id="KW-0963">Cytoplasm</keyword>
<keyword id="KW-0687">Ribonucleoprotein</keyword>
<keyword id="KW-0689">Ribosomal protein</keyword>
<name>RL13_ICTPU</name>
<protein>
    <recommendedName>
        <fullName evidence="2">Large ribosomal subunit protein eL13</fullName>
    </recommendedName>
    <alternativeName>
        <fullName>60S ribosomal protein L13</fullName>
    </alternativeName>
</protein>
<reference key="1">
    <citation type="journal article" date="2003" name="Gene">
        <title>Translational machinery of channel catfish: II. Complementary DNA and expression of the complete set of 47 60S ribosomal proteins.</title>
        <authorList>
            <person name="Patterson A.P."/>
            <person name="Karsi A."/>
            <person name="Feng J."/>
            <person name="Liu Z.J."/>
        </authorList>
    </citation>
    <scope>NUCLEOTIDE SEQUENCE [MRNA]</scope>
</reference>
<dbReference type="EMBL" id="AF401567">
    <property type="protein sequence ID" value="AAK95139.1"/>
    <property type="molecule type" value="mRNA"/>
</dbReference>
<dbReference type="RefSeq" id="NP_001187042.1">
    <property type="nucleotide sequence ID" value="NM_001200113.1"/>
</dbReference>
<dbReference type="SMR" id="Q90YV5"/>
<dbReference type="STRING" id="7998.ENSIPUP00000014330"/>
<dbReference type="GeneID" id="100304529"/>
<dbReference type="KEGG" id="ipu:100304529"/>
<dbReference type="CTD" id="6137"/>
<dbReference type="OMA" id="IQKNHFR"/>
<dbReference type="OrthoDB" id="10264538at2759"/>
<dbReference type="Proteomes" id="UP000221080">
    <property type="component" value="Chromosome 10"/>
</dbReference>
<dbReference type="GO" id="GO:0022625">
    <property type="term" value="C:cytosolic large ribosomal subunit"/>
    <property type="evidence" value="ECO:0007669"/>
    <property type="project" value="TreeGrafter"/>
</dbReference>
<dbReference type="GO" id="GO:0003723">
    <property type="term" value="F:RNA binding"/>
    <property type="evidence" value="ECO:0007669"/>
    <property type="project" value="TreeGrafter"/>
</dbReference>
<dbReference type="GO" id="GO:0003735">
    <property type="term" value="F:structural constituent of ribosome"/>
    <property type="evidence" value="ECO:0007669"/>
    <property type="project" value="InterPro"/>
</dbReference>
<dbReference type="GO" id="GO:0006412">
    <property type="term" value="P:translation"/>
    <property type="evidence" value="ECO:0007669"/>
    <property type="project" value="InterPro"/>
</dbReference>
<dbReference type="FunFam" id="1.20.5.110:FF:000003">
    <property type="entry name" value="60S ribosomal protein L13"/>
    <property type="match status" value="1"/>
</dbReference>
<dbReference type="Gene3D" id="1.20.5.110">
    <property type="match status" value="1"/>
</dbReference>
<dbReference type="HAMAP" id="MF_00499">
    <property type="entry name" value="Ribosomal_eL13"/>
    <property type="match status" value="1"/>
</dbReference>
<dbReference type="InterPro" id="IPR001380">
    <property type="entry name" value="Ribosomal_eL13"/>
</dbReference>
<dbReference type="InterPro" id="IPR018256">
    <property type="entry name" value="Ribosomal_eL13_CS"/>
</dbReference>
<dbReference type="PANTHER" id="PTHR11722">
    <property type="entry name" value="60S RIBOSOMAL PROTEIN L13"/>
    <property type="match status" value="1"/>
</dbReference>
<dbReference type="PANTHER" id="PTHR11722:SF0">
    <property type="entry name" value="LARGE RIBOSOMAL SUBUNIT PROTEIN EL13"/>
    <property type="match status" value="1"/>
</dbReference>
<dbReference type="Pfam" id="PF01294">
    <property type="entry name" value="Ribosomal_L13e"/>
    <property type="match status" value="1"/>
</dbReference>
<dbReference type="PROSITE" id="PS01104">
    <property type="entry name" value="RIBOSOMAL_L13E"/>
    <property type="match status" value="1"/>
</dbReference>
<accession>Q90YV5</accession>
<proteinExistence type="evidence at transcript level"/>
<comment type="function">
    <text evidence="1">Component of the ribosome, a large ribonucleoprotein complex responsible for the synthesis of proteins in the cell. The small ribosomal subunit (SSU) binds messenger RNAs (mRNAs) and translates the encoded message by selecting cognate aminoacyl-transfer RNA (tRNA) molecules. The large subunit (LSU) contains the ribosomal catalytic site termed the peptidyl transferase center (PTC), which catalyzes the formation of peptide bonds, thereby polymerizing the amino acids delivered by tRNAs into a polypeptide chain. The nascent polypeptides leave the ribosome through a tunnel in the LSU and interact with protein factors that function in enzymatic processing, targeting, and the membrane insertion of nascent chains at the exit of the ribosomal tunnel. As part of the LSU, it is probably required for its formation and the maturation of rRNAs.</text>
</comment>
<comment type="subunit">
    <text evidence="1">Component of the 60S large ribosomal subunit (LSU).</text>
</comment>
<comment type="subcellular location">
    <subcellularLocation>
        <location evidence="1">Cytoplasm</location>
    </subcellularLocation>
</comment>
<comment type="similarity">
    <text evidence="2">Belongs to the eukaryotic ribosomal protein eL13 family.</text>
</comment>
<sequence>MAPSRNGMILNPHFHKDWQKRVRTWFNQPARKLRRRKARQAKARRIAPRPVAGPLRPIVRCPTVRYNTKVRAGRGFTLEELKAAGINKRVARTIGIAVDPRRRNRSTESLHVNVQRLKVYRSKLILFPRKVSAPKKGDSTEEEVKMATQLTGPVMPIKIVHKKEKARMITEEEKKFNAFANLRMARANARLFGIRAKRAKEAAEQDVEKKK</sequence>
<evidence type="ECO:0000250" key="1">
    <source>
        <dbReference type="UniProtKB" id="P26373"/>
    </source>
</evidence>
<evidence type="ECO:0000305" key="2"/>
<feature type="chain" id="PRO_0000192924" description="Large ribosomal subunit protein eL13">
    <location>
        <begin position="1"/>
        <end position="211"/>
    </location>
</feature>